<dbReference type="EMBL" id="AK095592">
    <property type="protein sequence ID" value="BAC04581.1"/>
    <property type="molecule type" value="mRNA"/>
</dbReference>
<dbReference type="EMBL" id="BC051353">
    <property type="protein sequence ID" value="AAH51353.1"/>
    <property type="molecule type" value="mRNA"/>
</dbReference>
<dbReference type="EMBL" id="BC126449">
    <property type="protein sequence ID" value="AAI26450.1"/>
    <property type="molecule type" value="mRNA"/>
</dbReference>
<dbReference type="CCDS" id="CCDS4342.1"/>
<dbReference type="RefSeq" id="NP_775762.1">
    <property type="nucleotide sequence ID" value="NM_173491.4"/>
</dbReference>
<dbReference type="PDB" id="6V4X">
    <property type="method" value="EM"/>
    <property type="resolution" value="3.20 A"/>
    <property type="chains" value="D=1-360"/>
</dbReference>
<dbReference type="PDB" id="8G1U">
    <property type="method" value="EM"/>
    <property type="resolution" value="2.83 A"/>
    <property type="chains" value="D/H/L/P=1-360"/>
</dbReference>
<dbReference type="PDBsum" id="6V4X"/>
<dbReference type="PDBsum" id="8G1U"/>
<dbReference type="EMDB" id="EMD-21050"/>
<dbReference type="EMDB" id="EMD-29677"/>
<dbReference type="SMR" id="P83369"/>
<dbReference type="BioGRID" id="126394">
    <property type="interactions" value="59"/>
</dbReference>
<dbReference type="ComplexPortal" id="CPX-2705">
    <property type="entry name" value="U7 small nuclear ribonucleoprotein complex"/>
</dbReference>
<dbReference type="CORUM" id="P83369"/>
<dbReference type="FunCoup" id="P83369">
    <property type="interactions" value="1918"/>
</dbReference>
<dbReference type="IntAct" id="P83369">
    <property type="interactions" value="39"/>
</dbReference>
<dbReference type="STRING" id="9606.ENSP00000286307"/>
<dbReference type="iPTMnet" id="P83369"/>
<dbReference type="PhosphoSitePlus" id="P83369"/>
<dbReference type="BioMuta" id="LSM11"/>
<dbReference type="DMDM" id="47117879"/>
<dbReference type="jPOST" id="P83369"/>
<dbReference type="MassIVE" id="P83369"/>
<dbReference type="PaxDb" id="9606-ENSP00000286307"/>
<dbReference type="PeptideAtlas" id="P83369"/>
<dbReference type="ProteomicsDB" id="57735"/>
<dbReference type="Pumba" id="P83369"/>
<dbReference type="Antibodypedia" id="48521">
    <property type="antibodies" value="148 antibodies from 22 providers"/>
</dbReference>
<dbReference type="DNASU" id="134353"/>
<dbReference type="Ensembl" id="ENST00000286307.6">
    <property type="protein sequence ID" value="ENSP00000286307.5"/>
    <property type="gene ID" value="ENSG00000155858.6"/>
</dbReference>
<dbReference type="GeneID" id="134353"/>
<dbReference type="KEGG" id="hsa:134353"/>
<dbReference type="MANE-Select" id="ENST00000286307.6">
    <property type="protein sequence ID" value="ENSP00000286307.5"/>
    <property type="RefSeq nucleotide sequence ID" value="NM_173491.4"/>
    <property type="RefSeq protein sequence ID" value="NP_775762.1"/>
</dbReference>
<dbReference type="UCSC" id="uc003lxf.2">
    <property type="organism name" value="human"/>
</dbReference>
<dbReference type="AGR" id="HGNC:30860"/>
<dbReference type="CTD" id="134353"/>
<dbReference type="DisGeNET" id="134353"/>
<dbReference type="GeneCards" id="LSM11"/>
<dbReference type="HGNC" id="HGNC:30860">
    <property type="gene designation" value="LSM11"/>
</dbReference>
<dbReference type="HPA" id="ENSG00000155858">
    <property type="expression patterns" value="Low tissue specificity"/>
</dbReference>
<dbReference type="MalaCards" id="LSM11"/>
<dbReference type="MIM" id="617910">
    <property type="type" value="gene"/>
</dbReference>
<dbReference type="MIM" id="619486">
    <property type="type" value="phenotype"/>
</dbReference>
<dbReference type="neXtProt" id="NX_P83369"/>
<dbReference type="OpenTargets" id="ENSG00000155858"/>
<dbReference type="Orphanet" id="51">
    <property type="disease" value="Aicardi-Goutieres syndrome"/>
</dbReference>
<dbReference type="PharmGKB" id="PA134983181"/>
<dbReference type="VEuPathDB" id="HostDB:ENSG00000155858"/>
<dbReference type="eggNOG" id="ENOG502QS1B">
    <property type="taxonomic scope" value="Eukaryota"/>
</dbReference>
<dbReference type="GeneTree" id="ENSGT00390000012944"/>
<dbReference type="HOGENOM" id="CLU_065821_0_0_1"/>
<dbReference type="InParanoid" id="P83369"/>
<dbReference type="OMA" id="QETSECA"/>
<dbReference type="OrthoDB" id="10002367at2759"/>
<dbReference type="PAN-GO" id="P83369">
    <property type="GO annotations" value="3 GO annotations based on evolutionary models"/>
</dbReference>
<dbReference type="PhylomeDB" id="P83369"/>
<dbReference type="TreeFam" id="TF326954"/>
<dbReference type="PathwayCommons" id="P83369"/>
<dbReference type="Reactome" id="R-HSA-111367">
    <property type="pathway name" value="SLBP independent Processing of Histone Pre-mRNAs"/>
</dbReference>
<dbReference type="Reactome" id="R-HSA-73856">
    <property type="pathway name" value="RNA Polymerase II Transcription Termination"/>
</dbReference>
<dbReference type="Reactome" id="R-HSA-77588">
    <property type="pathway name" value="SLBP Dependent Processing of Replication-Dependent Histone Pre-mRNAs"/>
</dbReference>
<dbReference type="SignaLink" id="P83369"/>
<dbReference type="BioGRID-ORCS" id="134353">
    <property type="hits" value="657 hits in 1183 CRISPR screens"/>
</dbReference>
<dbReference type="ChiTaRS" id="LSM11">
    <property type="organism name" value="human"/>
</dbReference>
<dbReference type="GenomeRNAi" id="134353"/>
<dbReference type="Pharos" id="P83369">
    <property type="development level" value="Tbio"/>
</dbReference>
<dbReference type="PRO" id="PR:P83369"/>
<dbReference type="Proteomes" id="UP000005640">
    <property type="component" value="Chromosome 5"/>
</dbReference>
<dbReference type="RNAct" id="P83369">
    <property type="molecule type" value="protein"/>
</dbReference>
<dbReference type="Bgee" id="ENSG00000155858">
    <property type="expression patterns" value="Expressed in secondary oocyte and 177 other cell types or tissues"/>
</dbReference>
<dbReference type="GO" id="GO:0071204">
    <property type="term" value="C:histone pre-mRNA 3'end processing complex"/>
    <property type="evidence" value="ECO:0000250"/>
    <property type="project" value="UniProtKB"/>
</dbReference>
<dbReference type="GO" id="GO:0016604">
    <property type="term" value="C:nuclear body"/>
    <property type="evidence" value="ECO:0000314"/>
    <property type="project" value="HPA"/>
</dbReference>
<dbReference type="GO" id="GO:0005654">
    <property type="term" value="C:nucleoplasm"/>
    <property type="evidence" value="ECO:0000314"/>
    <property type="project" value="HPA"/>
</dbReference>
<dbReference type="GO" id="GO:0005634">
    <property type="term" value="C:nucleus"/>
    <property type="evidence" value="ECO:0000314"/>
    <property type="project" value="UniProtKB"/>
</dbReference>
<dbReference type="GO" id="GO:0005697">
    <property type="term" value="C:telomerase holoenzyme complex"/>
    <property type="evidence" value="ECO:0000314"/>
    <property type="project" value="BHF-UCL"/>
</dbReference>
<dbReference type="GO" id="GO:0005683">
    <property type="term" value="C:U7 snRNP"/>
    <property type="evidence" value="ECO:0000314"/>
    <property type="project" value="UniProtKB"/>
</dbReference>
<dbReference type="GO" id="GO:0071209">
    <property type="term" value="F:U7 snRNA binding"/>
    <property type="evidence" value="ECO:0000314"/>
    <property type="project" value="UniProtKB"/>
</dbReference>
<dbReference type="GO" id="GO:0006398">
    <property type="term" value="P:mRNA 3'-end processing by stem-loop binding and cleavage"/>
    <property type="evidence" value="ECO:0000315"/>
    <property type="project" value="UniProtKB"/>
</dbReference>
<dbReference type="GO" id="GO:1900087">
    <property type="term" value="P:positive regulation of G1/S transition of mitotic cell cycle"/>
    <property type="evidence" value="ECO:0000315"/>
    <property type="project" value="UniProtKB"/>
</dbReference>
<dbReference type="GO" id="GO:1902275">
    <property type="term" value="P:regulation of chromatin organization"/>
    <property type="evidence" value="ECO:0000315"/>
    <property type="project" value="UniProtKB"/>
</dbReference>
<dbReference type="CDD" id="cd01739">
    <property type="entry name" value="LSm11_M"/>
    <property type="match status" value="1"/>
</dbReference>
<dbReference type="FunFam" id="2.30.30.100:FF:000158">
    <property type="entry name" value="LSM11, U7 small nuclear RNA associated"/>
    <property type="match status" value="1"/>
</dbReference>
<dbReference type="Gene3D" id="2.30.30.100">
    <property type="match status" value="1"/>
</dbReference>
<dbReference type="InterPro" id="IPR039267">
    <property type="entry name" value="Lsm11"/>
</dbReference>
<dbReference type="InterPro" id="IPR034109">
    <property type="entry name" value="Lsm11_M"/>
</dbReference>
<dbReference type="InterPro" id="IPR010920">
    <property type="entry name" value="LSM_dom_sf"/>
</dbReference>
<dbReference type="InterPro" id="IPR047575">
    <property type="entry name" value="Sm"/>
</dbReference>
<dbReference type="InterPro" id="IPR001163">
    <property type="entry name" value="Sm_dom_euk/arc"/>
</dbReference>
<dbReference type="PANTHER" id="PTHR21415">
    <property type="entry name" value="U7 SNRNA-ASSOCIATED SM-LIKE PROTEIN LSM11"/>
    <property type="match status" value="1"/>
</dbReference>
<dbReference type="PANTHER" id="PTHR21415:SF1">
    <property type="entry name" value="U7 SNRNA-ASSOCIATED SM-LIKE PROTEIN LSM11"/>
    <property type="match status" value="1"/>
</dbReference>
<dbReference type="SMART" id="SM00651">
    <property type="entry name" value="Sm"/>
    <property type="match status" value="1"/>
</dbReference>
<dbReference type="SUPFAM" id="SSF50182">
    <property type="entry name" value="Sm-like ribonucleoproteins"/>
    <property type="match status" value="2"/>
</dbReference>
<dbReference type="PROSITE" id="PS52002">
    <property type="entry name" value="SM"/>
    <property type="match status" value="1"/>
</dbReference>
<gene>
    <name evidence="9 12" type="primary">LSM11</name>
</gene>
<keyword id="KW-0002">3D-structure</keyword>
<keyword id="KW-0948">Aicardi-Goutieres syndrome</keyword>
<keyword id="KW-0903">Direct protein sequencing</keyword>
<keyword id="KW-0225">Disease variant</keyword>
<keyword id="KW-1017">Isopeptide bond</keyword>
<keyword id="KW-0488">Methylation</keyword>
<keyword id="KW-0507">mRNA processing</keyword>
<keyword id="KW-0539">Nucleus</keyword>
<keyword id="KW-0597">Phosphoprotein</keyword>
<keyword id="KW-1267">Proteomics identification</keyword>
<keyword id="KW-1185">Reference proteome</keyword>
<keyword id="KW-0677">Repeat</keyword>
<keyword id="KW-0687">Ribonucleoprotein</keyword>
<keyword id="KW-0694">RNA-binding</keyword>
<keyword id="KW-0832">Ubl conjugation</keyword>
<evidence type="ECO:0000250" key="1">
    <source>
        <dbReference type="UniProtKB" id="Q8BUV6"/>
    </source>
</evidence>
<evidence type="ECO:0000255" key="2">
    <source>
        <dbReference type="PROSITE-ProRule" id="PRU01346"/>
    </source>
</evidence>
<evidence type="ECO:0000256" key="3">
    <source>
        <dbReference type="SAM" id="MobiDB-lite"/>
    </source>
</evidence>
<evidence type="ECO:0000269" key="4">
    <source>
    </source>
</evidence>
<evidence type="ECO:0000269" key="5">
    <source>
    </source>
</evidence>
<evidence type="ECO:0000269" key="6">
    <source>
    </source>
</evidence>
<evidence type="ECO:0000269" key="7">
    <source>
    </source>
</evidence>
<evidence type="ECO:0000269" key="8">
    <source>
    </source>
</evidence>
<evidence type="ECO:0000303" key="9">
    <source>
    </source>
</evidence>
<evidence type="ECO:0000303" key="10">
    <source>
    </source>
</evidence>
<evidence type="ECO:0000305" key="11"/>
<evidence type="ECO:0000312" key="12">
    <source>
        <dbReference type="HGNC" id="HGNC:30860"/>
    </source>
</evidence>
<evidence type="ECO:0007744" key="13">
    <source>
    </source>
</evidence>
<evidence type="ECO:0007744" key="14">
    <source>
    </source>
</evidence>
<evidence type="ECO:0007744" key="15">
    <source>
    </source>
</evidence>
<evidence type="ECO:0007829" key="16">
    <source>
        <dbReference type="PDB" id="6V4X"/>
    </source>
</evidence>
<evidence type="ECO:0007829" key="17">
    <source>
        <dbReference type="PDB" id="8G1U"/>
    </source>
</evidence>
<reference key="1">
    <citation type="journal article" date="2004" name="Nat. Genet.">
        <title>Complete sequencing and characterization of 21,243 full-length human cDNAs.</title>
        <authorList>
            <person name="Ota T."/>
            <person name="Suzuki Y."/>
            <person name="Nishikawa T."/>
            <person name="Otsuki T."/>
            <person name="Sugiyama T."/>
            <person name="Irie R."/>
            <person name="Wakamatsu A."/>
            <person name="Hayashi K."/>
            <person name="Sato H."/>
            <person name="Nagai K."/>
            <person name="Kimura K."/>
            <person name="Makita H."/>
            <person name="Sekine M."/>
            <person name="Obayashi M."/>
            <person name="Nishi T."/>
            <person name="Shibahara T."/>
            <person name="Tanaka T."/>
            <person name="Ishii S."/>
            <person name="Yamamoto J."/>
            <person name="Saito K."/>
            <person name="Kawai Y."/>
            <person name="Isono Y."/>
            <person name="Nakamura Y."/>
            <person name="Nagahari K."/>
            <person name="Murakami K."/>
            <person name="Yasuda T."/>
            <person name="Iwayanagi T."/>
            <person name="Wagatsuma M."/>
            <person name="Shiratori A."/>
            <person name="Sudo H."/>
            <person name="Hosoiri T."/>
            <person name="Kaku Y."/>
            <person name="Kodaira H."/>
            <person name="Kondo H."/>
            <person name="Sugawara M."/>
            <person name="Takahashi M."/>
            <person name="Kanda K."/>
            <person name="Yokoi T."/>
            <person name="Furuya T."/>
            <person name="Kikkawa E."/>
            <person name="Omura Y."/>
            <person name="Abe K."/>
            <person name="Kamihara K."/>
            <person name="Katsuta N."/>
            <person name="Sato K."/>
            <person name="Tanikawa M."/>
            <person name="Yamazaki M."/>
            <person name="Ninomiya K."/>
            <person name="Ishibashi T."/>
            <person name="Yamashita H."/>
            <person name="Murakawa K."/>
            <person name="Fujimori K."/>
            <person name="Tanai H."/>
            <person name="Kimata M."/>
            <person name="Watanabe M."/>
            <person name="Hiraoka S."/>
            <person name="Chiba Y."/>
            <person name="Ishida S."/>
            <person name="Ono Y."/>
            <person name="Takiguchi S."/>
            <person name="Watanabe S."/>
            <person name="Yosida M."/>
            <person name="Hotuta T."/>
            <person name="Kusano J."/>
            <person name="Kanehori K."/>
            <person name="Takahashi-Fujii A."/>
            <person name="Hara H."/>
            <person name="Tanase T.-O."/>
            <person name="Nomura Y."/>
            <person name="Togiya S."/>
            <person name="Komai F."/>
            <person name="Hara R."/>
            <person name="Takeuchi K."/>
            <person name="Arita M."/>
            <person name="Imose N."/>
            <person name="Musashino K."/>
            <person name="Yuuki H."/>
            <person name="Oshima A."/>
            <person name="Sasaki N."/>
            <person name="Aotsuka S."/>
            <person name="Yoshikawa Y."/>
            <person name="Matsunawa H."/>
            <person name="Ichihara T."/>
            <person name="Shiohata N."/>
            <person name="Sano S."/>
            <person name="Moriya S."/>
            <person name="Momiyama H."/>
            <person name="Satoh N."/>
            <person name="Takami S."/>
            <person name="Terashima Y."/>
            <person name="Suzuki O."/>
            <person name="Nakagawa S."/>
            <person name="Senoh A."/>
            <person name="Mizoguchi H."/>
            <person name="Goto Y."/>
            <person name="Shimizu F."/>
            <person name="Wakebe H."/>
            <person name="Hishigaki H."/>
            <person name="Watanabe T."/>
            <person name="Sugiyama A."/>
            <person name="Takemoto M."/>
            <person name="Kawakami B."/>
            <person name="Yamazaki M."/>
            <person name="Watanabe K."/>
            <person name="Kumagai A."/>
            <person name="Itakura S."/>
            <person name="Fukuzumi Y."/>
            <person name="Fujimori Y."/>
            <person name="Komiyama M."/>
            <person name="Tashiro H."/>
            <person name="Tanigami A."/>
            <person name="Fujiwara T."/>
            <person name="Ono T."/>
            <person name="Yamada K."/>
            <person name="Fujii Y."/>
            <person name="Ozaki K."/>
            <person name="Hirao M."/>
            <person name="Ohmori Y."/>
            <person name="Kawabata A."/>
            <person name="Hikiji T."/>
            <person name="Kobatake N."/>
            <person name="Inagaki H."/>
            <person name="Ikema Y."/>
            <person name="Okamoto S."/>
            <person name="Okitani R."/>
            <person name="Kawakami T."/>
            <person name="Noguchi S."/>
            <person name="Itoh T."/>
            <person name="Shigeta K."/>
            <person name="Senba T."/>
            <person name="Matsumura K."/>
            <person name="Nakajima Y."/>
            <person name="Mizuno T."/>
            <person name="Morinaga M."/>
            <person name="Sasaki M."/>
            <person name="Togashi T."/>
            <person name="Oyama M."/>
            <person name="Hata H."/>
            <person name="Watanabe M."/>
            <person name="Komatsu T."/>
            <person name="Mizushima-Sugano J."/>
            <person name="Satoh T."/>
            <person name="Shirai Y."/>
            <person name="Takahashi Y."/>
            <person name="Nakagawa K."/>
            <person name="Okumura K."/>
            <person name="Nagase T."/>
            <person name="Nomura N."/>
            <person name="Kikuchi H."/>
            <person name="Masuho Y."/>
            <person name="Yamashita R."/>
            <person name="Nakai K."/>
            <person name="Yada T."/>
            <person name="Nakamura Y."/>
            <person name="Ohara O."/>
            <person name="Isogai T."/>
            <person name="Sugano S."/>
        </authorList>
    </citation>
    <scope>NUCLEOTIDE SEQUENCE [LARGE SCALE MRNA]</scope>
    <source>
        <tissue>Brain</tissue>
    </source>
</reference>
<reference key="2">
    <citation type="journal article" date="2004" name="Genome Res.">
        <title>The status, quality, and expansion of the NIH full-length cDNA project: the Mammalian Gene Collection (MGC).</title>
        <authorList>
            <consortium name="The MGC Project Team"/>
        </authorList>
    </citation>
    <scope>NUCLEOTIDE SEQUENCE [LARGE SCALE MRNA]</scope>
    <source>
        <tissue>Ovary</tissue>
    </source>
</reference>
<reference key="3">
    <citation type="journal article" date="2003" name="Genes Dev.">
        <title>Unique Sm core structure of U7 snRNPs: assembly by a specialized SMN complex and the role of a new component, Lsm11, in histone RNA processing.</title>
        <authorList>
            <person name="Pillai R.S."/>
            <person name="Grimmler M."/>
            <person name="Meister G."/>
            <person name="Will C.L."/>
            <person name="Luehrmann R."/>
            <person name="Fischer U."/>
            <person name="Schuemperli D."/>
        </authorList>
    </citation>
    <scope>PROTEIN SEQUENCE OF 115-130; 147-160; 217-224; 231-236; 242-260; 280-289; 303-315 AND 333-360</scope>
    <scope>INTERACTION WITH LSM10; SMN AND SNRPB</scope>
    <scope>RNA-BINDING</scope>
    <scope>SUBCELLULAR LOCATION</scope>
    <source>
        <tissue>Cervix carcinoma</tissue>
    </source>
</reference>
<reference key="4">
    <citation type="journal article" date="2001" name="EMBO J.">
        <title>Purified U7 snRNPs lack the Sm proteins D1 and D2 but contain Lsm10, a new 14 kDa Sm D1-like protein.</title>
        <authorList>
            <person name="Pillai R.S."/>
            <person name="Will C.L."/>
            <person name="Luehrmann R."/>
            <person name="Schuemperli D."/>
            <person name="Mueller B."/>
        </authorList>
    </citation>
    <scope>IDENTIFICATION IN THE U7 SNRNP COMPLEX</scope>
</reference>
<reference key="5">
    <citation type="journal article" date="2006" name="Mol. Cell. Biol.">
        <title>ZFP100, a component of the active U7 snRNP limiting for histone pre-mRNA processing, is required for entry into S phase.</title>
        <authorList>
            <person name="Wagner E.J."/>
            <person name="Marzluff W.F."/>
        </authorList>
    </citation>
    <scope>FUNCTION</scope>
</reference>
<reference key="6">
    <citation type="journal article" date="2006" name="RNA">
        <title>Conserved zinc fingers mediate multiple functions of ZFP100, a U7snRNP associated protein.</title>
        <authorList>
            <person name="Wagner E.J."/>
            <person name="Ospina J.K."/>
            <person name="Hu Y."/>
            <person name="Dundr M."/>
            <person name="Matera A.G."/>
            <person name="Marzluff W.F."/>
        </authorList>
    </citation>
    <scope>INTERACTION WITH ZNF473</scope>
</reference>
<reference key="7">
    <citation type="journal article" date="2008" name="Proc. Natl. Acad. Sci. U.S.A.">
        <title>A quantitative atlas of mitotic phosphorylation.</title>
        <authorList>
            <person name="Dephoure N."/>
            <person name="Zhou C."/>
            <person name="Villen J."/>
            <person name="Beausoleil S.A."/>
            <person name="Bakalarski C.E."/>
            <person name="Elledge S.J."/>
            <person name="Gygi S.P."/>
        </authorList>
    </citation>
    <scope>PHOSPHORYLATION [LARGE SCALE ANALYSIS] AT SER-21</scope>
    <scope>IDENTIFICATION BY MASS SPECTROMETRY [LARGE SCALE ANALYSIS]</scope>
    <source>
        <tissue>Cervix carcinoma</tissue>
    </source>
</reference>
<reference key="8">
    <citation type="journal article" date="2013" name="J. Proteome Res.">
        <title>Toward a comprehensive characterization of a human cancer cell phosphoproteome.</title>
        <authorList>
            <person name="Zhou H."/>
            <person name="Di Palma S."/>
            <person name="Preisinger C."/>
            <person name="Peng M."/>
            <person name="Polat A.N."/>
            <person name="Heck A.J."/>
            <person name="Mohammed S."/>
        </authorList>
    </citation>
    <scope>PHOSPHORYLATION [LARGE SCALE ANALYSIS] AT SER-15; SER-21; SER-154 AND SER-280</scope>
    <scope>IDENTIFICATION BY MASS SPECTROMETRY [LARGE SCALE ANALYSIS]</scope>
    <source>
        <tissue>Cervix carcinoma</tissue>
        <tissue>Erythroleukemia</tissue>
    </source>
</reference>
<reference key="9">
    <citation type="journal article" date="2017" name="Nat. Struct. Mol. Biol.">
        <title>Site-specific mapping of the human SUMO proteome reveals co-modification with phosphorylation.</title>
        <authorList>
            <person name="Hendriks I.A."/>
            <person name="Lyon D."/>
            <person name="Young C."/>
            <person name="Jensen L.J."/>
            <person name="Vertegaal A.C."/>
            <person name="Nielsen M.L."/>
        </authorList>
    </citation>
    <scope>SUMOYLATION [LARGE SCALE ANALYSIS] AT LYS-120</scope>
    <scope>IDENTIFICATION BY MASS SPECTROMETRY [LARGE SCALE ANALYSIS]</scope>
</reference>
<reference key="10">
    <citation type="journal article" date="2020" name="Nat. Genet.">
        <title>cGAS-mediated induction of type I interferon due to inborn errors of histone pre-mRNA processing.</title>
        <authorList>
            <person name="Uggenti C."/>
            <person name="Lepelley A."/>
            <person name="Depp M."/>
            <person name="Badrock A.P."/>
            <person name="Rodero M.P."/>
            <person name="El-Daher M.T."/>
            <person name="Rice G.I."/>
            <person name="Dhir S."/>
            <person name="Wheeler A.P."/>
            <person name="Dhir A."/>
            <person name="Albawardi W."/>
            <person name="Fremond M.L."/>
            <person name="Seabra L."/>
            <person name="Doig J."/>
            <person name="Blair N."/>
            <person name="Martin-Niclos M.J."/>
            <person name="Della Mina E."/>
            <person name="Rubio-Roldan A."/>
            <person name="Garcia-Perez J.L."/>
            <person name="Sproul D."/>
            <person name="Rehwinkel J."/>
            <person name="Hertzog J."/>
            <person name="Boland-Auge A."/>
            <person name="Olaso R."/>
            <person name="Deleuze J.F."/>
            <person name="Baruteau J."/>
            <person name="Brochard K."/>
            <person name="Buckley J."/>
            <person name="Cavallera V."/>
            <person name="Cereda C."/>
            <person name="De Waele L.M.H."/>
            <person name="Dobbie A."/>
            <person name="Doummar D."/>
            <person name="Elmslie F."/>
            <person name="Koch-Hogrebe M."/>
            <person name="Kumar R."/>
            <person name="Lamb K."/>
            <person name="Livingston J.H."/>
            <person name="Majumdar A."/>
            <person name="Lorenco C.M."/>
            <person name="Orcesi S."/>
            <person name="Peudenier S."/>
            <person name="Rostasy K."/>
            <person name="Salmon C.A."/>
            <person name="Scott C."/>
            <person name="Tonduti D."/>
            <person name="Touati G."/>
            <person name="Valente M."/>
            <person name="van der Linden H. Jr."/>
            <person name="Van Esch H."/>
            <person name="Vermelle M."/>
            <person name="Webb K."/>
            <person name="Jackson A.P."/>
            <person name="Reijns M.A.M."/>
            <person name="Gilbert N."/>
            <person name="Crow Y.J."/>
        </authorList>
    </citation>
    <scope>VARIANT AGS8 SER-211</scope>
    <scope>CHARACTERIZATION OF VARIANT AGS8 SER-211</scope>
    <scope>FUNCTION</scope>
</reference>
<name>LSM11_HUMAN</name>
<comment type="function">
    <text evidence="1 4 7 8">Component of the U7 snRNP complex that is involved in the histone 3'-end pre-mRNA processing (PubMed:11574479, PubMed:16914750, PubMed:33230297). Increases U7 snRNA levels but not histone 3'-end pre-mRNA processing activity, when overexpressed (PubMed:11574479, PubMed:16914750). Required for cell cycle progression from G1 to S phases (By similarity). Binds specifically to the Sm-binding site of U7 snRNA (PubMed:11574479, PubMed:16914750).</text>
</comment>
<comment type="subunit">
    <text evidence="1 4 5 6">Component of the heptameric ring U7 snRNP complex, or U7 Sm protein core complex, at least composed of LSM10, LSM11, SNRPB, SNRPD3, SNRPE, SNRPF, SNRPG and U7 snRNA (PubMed:11574479, PubMed:12975319). Formation of the U7 snRNP is an ATP-dependent process mediated by a specialized SMN complex containing at least the Sm protein core complex and additionally, the U7-specific LSM10 and LSM11 proteins (PubMed:11574479). Identified in a histone pre-mRNA complex, at least composed of ERI1, LSM11, SLBP, SNRPB, SYNCRIP and YBX1 (By similarity). Interacts (via the Sm domains) with CLNS1A (By similarity). Interacts with SMN and ZNF473 (PubMed:12975319, PubMed:16714279). Interacts with PRMT5 and WDR77 (By similarity).</text>
</comment>
<comment type="interaction">
    <interactant intactId="EBI-2626024">
        <id>P83369</id>
    </interactant>
    <interactant intactId="EBI-4401710">
        <id>A4D1S5</id>
        <label>RAB19</label>
    </interactant>
    <organismsDiffer>false</organismsDiffer>
    <experiments>3</experiments>
</comment>
<comment type="subcellular location">
    <subcellularLocation>
        <location evidence="5">Nucleus</location>
    </subcellularLocation>
</comment>
<comment type="domain">
    <text evidence="1">The C-terminal SM 1 domain is both necessary for the binding to the Sm-binding site of U7 snRNA and U7 snRNP assembly (By similarity). The N-terminal domain is essential for histone pre-mRNA cleavage (By similarity). Amino acids 63-82 are sufficient to interact with ZNF473 (By similarity).</text>
</comment>
<comment type="disease">
    <disease id="DI-06175">
        <name>Aicardi-Goutieres syndrome 8</name>
        <acronym>AGS8</acronym>
        <description>A form of Aicardi-Goutieres syndrome, a genetically heterogeneous disease characterized by cerebral atrophy, leukoencephalopathy, intracranial calcifications, chronic cerebrospinal fluid (CSF) lymphocytosis, increased CSF alpha-interferon, and negative serologic investigations for common prenatal infection. Clinical features as thrombocytopenia, hepatosplenomegaly and elevated hepatic transaminases along with intermittent fever may erroneously suggest an infective process. Severe neurological dysfunctions manifest in infancy as progressive microcephaly, spasticity, dystonic posturing and profound psychomotor retardation. Death often occurs in early childhood. AGS8 inheritance is autosomal recessive.</description>
        <dbReference type="MIM" id="619486"/>
    </disease>
    <text evidence="8">The disease is caused by variants affecting the gene represented in this entry. Impaired histone 3'-end pre-mRNA processing caused by disease variants affects chromatin structure, relieving CGAS inhibition by nucleosomes (PubMed:33230297). This activates the cGAS-STING pathway, triggering type-I interferon production and autoinflammation (PubMed:33230297).</text>
</comment>
<comment type="similarity">
    <text evidence="11">Belongs to the snRNP Sm proteins family.</text>
</comment>
<sequence>MEERERGARSAGAGSPARPPSPRLDVSSDSFDPLLALYAPRLPPIPYPNAPCFNNVAEYESFLRTGVRGGGRGRGRARGAAAGSGVPAAPGPSGRTRRRPDAPAPDPERIQRLRRLMVAKEEGDGAAGAGRRGPGRSRKAPRNVLTRMPLHEGSPLGELHRCIREGVKVNVHIRTFKGLRGVCTGFLVAFDKFWNMALTDVDETYRKPVLGKAYERDSSLTLTRLFDRLKLQDSSKKEADSKSAVEDSTLSRYSQTSTWKLASVWGRADTGRGSHKRSRSVPSSLQASAREESRSELSGRTTRTDGSSVGGTFSRATTLSRGQSRKKKRKPKVDYQQVFTRHINQIFIRGENVLLVHLAQ</sequence>
<feature type="chain" id="PRO_0000125587" description="U7 snRNA-associated Sm-like protein LSm11">
    <location>
        <begin position="1"/>
        <end position="360"/>
    </location>
</feature>
<feature type="domain" description="Sm" evidence="2">
    <location>
        <begin position="154"/>
        <end position="229"/>
    </location>
</feature>
<feature type="region of interest" description="Disordered" evidence="3">
    <location>
        <begin position="1"/>
        <end position="29"/>
    </location>
</feature>
<feature type="region of interest" description="Disordered" evidence="3">
    <location>
        <begin position="68"/>
        <end position="143"/>
    </location>
</feature>
<feature type="region of interest" description="SM 1" evidence="10">
    <location>
        <begin position="171"/>
        <end position="204"/>
    </location>
</feature>
<feature type="region of interest" description="Disordered" evidence="3">
    <location>
        <begin position="268"/>
        <end position="333"/>
    </location>
</feature>
<feature type="region of interest" description="SM 2" evidence="10">
    <location>
        <begin position="343"/>
        <end position="356"/>
    </location>
</feature>
<feature type="compositionally biased region" description="Low complexity" evidence="3">
    <location>
        <begin position="78"/>
        <end position="94"/>
    </location>
</feature>
<feature type="compositionally biased region" description="Polar residues" evidence="3">
    <location>
        <begin position="299"/>
        <end position="322"/>
    </location>
</feature>
<feature type="modified residue" description="Phosphoserine" evidence="14">
    <location>
        <position position="15"/>
    </location>
</feature>
<feature type="modified residue" description="Phosphoserine" evidence="13 14">
    <location>
        <position position="21"/>
    </location>
</feature>
<feature type="modified residue" description="Omega-N-methylarginine" evidence="1">
    <location>
        <position position="41"/>
    </location>
</feature>
<feature type="modified residue" description="Phosphoserine" evidence="14">
    <location>
        <position position="154"/>
    </location>
</feature>
<feature type="modified residue" description="Phosphoserine" evidence="14">
    <location>
        <position position="280"/>
    </location>
</feature>
<feature type="cross-link" description="Glycyl lysine isopeptide (Lys-Gly) (interchain with G-Cter in SUMO2)" evidence="15">
    <location>
        <position position="120"/>
    </location>
</feature>
<feature type="sequence variant" id="VAR_085527" description="In AGS8; impaired histone 3'-end pre-mRNA processing, leading to defects in chromatin structure; promoting CGAS-dependent activation of the type I interferon pathway; dbSNP:rs2113077087." evidence="8">
    <original>G</original>
    <variation>S</variation>
    <location>
        <position position="211"/>
    </location>
</feature>
<feature type="strand" evidence="17">
    <location>
        <begin position="73"/>
        <end position="75"/>
    </location>
</feature>
<feature type="helix" evidence="16">
    <location>
        <begin position="109"/>
        <end position="113"/>
    </location>
</feature>
<feature type="turn" evidence="16">
    <location>
        <begin position="144"/>
        <end position="146"/>
    </location>
</feature>
<feature type="strand" evidence="16">
    <location>
        <begin position="147"/>
        <end position="149"/>
    </location>
</feature>
<feature type="helix" evidence="16">
    <location>
        <begin position="155"/>
        <end position="158"/>
    </location>
</feature>
<feature type="helix" evidence="16">
    <location>
        <begin position="161"/>
        <end position="165"/>
    </location>
</feature>
<feature type="strand" evidence="16">
    <location>
        <begin position="168"/>
        <end position="174"/>
    </location>
</feature>
<feature type="strand" evidence="16">
    <location>
        <begin position="176"/>
        <end position="182"/>
    </location>
</feature>
<feature type="strand" evidence="16">
    <location>
        <begin position="185"/>
        <end position="190"/>
    </location>
</feature>
<feature type="strand" evidence="16">
    <location>
        <begin position="196"/>
        <end position="206"/>
    </location>
</feature>
<feature type="strand" evidence="16">
    <location>
        <begin position="338"/>
        <end position="345"/>
    </location>
</feature>
<feature type="strand" evidence="16">
    <location>
        <begin position="352"/>
        <end position="358"/>
    </location>
</feature>
<protein>
    <recommendedName>
        <fullName evidence="11">U7 snRNA-associated Sm-like protein LSm11</fullName>
    </recommendedName>
</protein>
<proteinExistence type="evidence at protein level"/>
<organism>
    <name type="scientific">Homo sapiens</name>
    <name type="common">Human</name>
    <dbReference type="NCBI Taxonomy" id="9606"/>
    <lineage>
        <taxon>Eukaryota</taxon>
        <taxon>Metazoa</taxon>
        <taxon>Chordata</taxon>
        <taxon>Craniata</taxon>
        <taxon>Vertebrata</taxon>
        <taxon>Euteleostomi</taxon>
        <taxon>Mammalia</taxon>
        <taxon>Eutheria</taxon>
        <taxon>Euarchontoglires</taxon>
        <taxon>Primates</taxon>
        <taxon>Haplorrhini</taxon>
        <taxon>Catarrhini</taxon>
        <taxon>Hominidae</taxon>
        <taxon>Homo</taxon>
    </lineage>
</organism>
<accession>P83369</accession>
<accession>A0AVQ1</accession>
<accession>Q7Z7P0</accession>
<accession>Q8N975</accession>